<keyword id="KW-0963">Cytoplasm</keyword>
<keyword id="KW-0521">NADP</keyword>
<keyword id="KW-0560">Oxidoreductase</keyword>
<keyword id="KW-0671">Queuosine biosynthesis</keyword>
<feature type="chain" id="PRO_1000213093" description="NADPH-dependent 7-cyano-7-deazaguanine reductase">
    <location>
        <begin position="1"/>
        <end position="153"/>
    </location>
</feature>
<feature type="region of interest" description="Disordered" evidence="2">
    <location>
        <begin position="1"/>
        <end position="30"/>
    </location>
</feature>
<feature type="active site" description="Thioimide intermediate" evidence="1">
    <location>
        <position position="51"/>
    </location>
</feature>
<feature type="active site" description="Proton donor" evidence="1">
    <location>
        <position position="58"/>
    </location>
</feature>
<feature type="binding site" evidence="1">
    <location>
        <begin position="73"/>
        <end position="75"/>
    </location>
    <ligand>
        <name>substrate</name>
    </ligand>
</feature>
<feature type="binding site" evidence="1">
    <location>
        <begin position="92"/>
        <end position="93"/>
    </location>
    <ligand>
        <name>substrate</name>
    </ligand>
</feature>
<proteinExistence type="inferred from homology"/>
<protein>
    <recommendedName>
        <fullName evidence="1">NADPH-dependent 7-cyano-7-deazaguanine reductase</fullName>
        <ecNumber evidence="1">1.7.1.13</ecNumber>
    </recommendedName>
    <alternativeName>
        <fullName evidence="1">7-cyano-7-carbaguanine reductase</fullName>
    </alternativeName>
    <alternativeName>
        <fullName evidence="1">NADPH-dependent nitrile oxidoreductase</fullName>
    </alternativeName>
    <alternativeName>
        <fullName evidence="1">PreQ(0) reductase</fullName>
    </alternativeName>
</protein>
<gene>
    <name evidence="1" type="primary">queF</name>
    <name type="ordered locus">Mext_2783</name>
</gene>
<evidence type="ECO:0000255" key="1">
    <source>
        <dbReference type="HAMAP-Rule" id="MF_00818"/>
    </source>
</evidence>
<evidence type="ECO:0000256" key="2">
    <source>
        <dbReference type="SAM" id="MobiDB-lite"/>
    </source>
</evidence>
<comment type="function">
    <text evidence="1">Catalyzes the NADPH-dependent reduction of 7-cyano-7-deazaguanine (preQ0) to 7-aminomethyl-7-deazaguanine (preQ1).</text>
</comment>
<comment type="catalytic activity">
    <reaction evidence="1">
        <text>7-aminomethyl-7-carbaguanine + 2 NADP(+) = 7-cyano-7-deazaguanine + 2 NADPH + 3 H(+)</text>
        <dbReference type="Rhea" id="RHEA:13409"/>
        <dbReference type="ChEBI" id="CHEBI:15378"/>
        <dbReference type="ChEBI" id="CHEBI:45075"/>
        <dbReference type="ChEBI" id="CHEBI:57783"/>
        <dbReference type="ChEBI" id="CHEBI:58349"/>
        <dbReference type="ChEBI" id="CHEBI:58703"/>
        <dbReference type="EC" id="1.7.1.13"/>
    </reaction>
</comment>
<comment type="pathway">
    <text evidence="1">tRNA modification; tRNA-queuosine biosynthesis.</text>
</comment>
<comment type="subcellular location">
    <subcellularLocation>
        <location evidence="1">Cytoplasm</location>
    </subcellularLocation>
</comment>
<comment type="similarity">
    <text evidence="1">Belongs to the GTP cyclohydrolase I family. QueF type 1 subfamily.</text>
</comment>
<name>QUEF_METEP</name>
<reference key="1">
    <citation type="submission" date="2007-12" db="EMBL/GenBank/DDBJ databases">
        <title>Complete sequence of Methylobacterium extorquens PA1.</title>
        <authorList>
            <consortium name="US DOE Joint Genome Institute"/>
            <person name="Copeland A."/>
            <person name="Lucas S."/>
            <person name="Lapidus A."/>
            <person name="Barry K."/>
            <person name="Glavina del Rio T."/>
            <person name="Dalin E."/>
            <person name="Tice H."/>
            <person name="Pitluck S."/>
            <person name="Saunders E."/>
            <person name="Brettin T."/>
            <person name="Bruce D."/>
            <person name="Detter J.C."/>
            <person name="Han C."/>
            <person name="Schmutz J."/>
            <person name="Larimer F."/>
            <person name="Land M."/>
            <person name="Hauser L."/>
            <person name="Kyrpides N."/>
            <person name="Kim E."/>
            <person name="Marx C."/>
            <person name="Richardson P."/>
        </authorList>
    </citation>
    <scope>NUCLEOTIDE SEQUENCE [LARGE SCALE GENOMIC DNA]</scope>
    <source>
        <strain>PA1</strain>
    </source>
</reference>
<accession>A9W6G8</accession>
<sequence>MDSIETHAKQLGQQTPLPASPEAAQLDRVPNPHADTDYLARFTAPEFTSLCPVTGQPDFATLVIDYVPDRWLVESKSLKLYLGAFRNHGAFHEDCTVGIGRRLVALLEPRWLRIGGYWYPRGGIPIDVFWQTGEPLKSVWLPDQGVAPYRGRG</sequence>
<dbReference type="EC" id="1.7.1.13" evidence="1"/>
<dbReference type="EMBL" id="CP000908">
    <property type="protein sequence ID" value="ABY31174.1"/>
    <property type="molecule type" value="Genomic_DNA"/>
</dbReference>
<dbReference type="RefSeq" id="WP_012254142.1">
    <property type="nucleotide sequence ID" value="NC_010172.1"/>
</dbReference>
<dbReference type="SMR" id="A9W6G8"/>
<dbReference type="GeneID" id="72990433"/>
<dbReference type="KEGG" id="mex:Mext_2783"/>
<dbReference type="eggNOG" id="COG0780">
    <property type="taxonomic scope" value="Bacteria"/>
</dbReference>
<dbReference type="HOGENOM" id="CLU_102489_0_1_5"/>
<dbReference type="BioCyc" id="MEXT419610:MEXT_RS14040-MONOMER"/>
<dbReference type="UniPathway" id="UPA00392"/>
<dbReference type="GO" id="GO:0005737">
    <property type="term" value="C:cytoplasm"/>
    <property type="evidence" value="ECO:0007669"/>
    <property type="project" value="UniProtKB-SubCell"/>
</dbReference>
<dbReference type="GO" id="GO:0033739">
    <property type="term" value="F:preQ1 synthase activity"/>
    <property type="evidence" value="ECO:0007669"/>
    <property type="project" value="UniProtKB-UniRule"/>
</dbReference>
<dbReference type="GO" id="GO:0008616">
    <property type="term" value="P:queuosine biosynthetic process"/>
    <property type="evidence" value="ECO:0007669"/>
    <property type="project" value="UniProtKB-UniRule"/>
</dbReference>
<dbReference type="GO" id="GO:0006400">
    <property type="term" value="P:tRNA modification"/>
    <property type="evidence" value="ECO:0007669"/>
    <property type="project" value="UniProtKB-UniRule"/>
</dbReference>
<dbReference type="Gene3D" id="3.30.1130.10">
    <property type="match status" value="1"/>
</dbReference>
<dbReference type="HAMAP" id="MF_00818">
    <property type="entry name" value="QueF_type1"/>
    <property type="match status" value="1"/>
</dbReference>
<dbReference type="InterPro" id="IPR043133">
    <property type="entry name" value="GTP-CH-I_C/QueF"/>
</dbReference>
<dbReference type="InterPro" id="IPR050084">
    <property type="entry name" value="NADPH_dep_7-cyano-7-deazaG_red"/>
</dbReference>
<dbReference type="InterPro" id="IPR029500">
    <property type="entry name" value="QueF"/>
</dbReference>
<dbReference type="InterPro" id="IPR016856">
    <property type="entry name" value="QueF_type1"/>
</dbReference>
<dbReference type="NCBIfam" id="TIGR03139">
    <property type="entry name" value="QueF-II"/>
    <property type="match status" value="1"/>
</dbReference>
<dbReference type="PANTHER" id="PTHR34354">
    <property type="entry name" value="NADPH-DEPENDENT 7-CYANO-7-DEAZAGUANINE REDUCTASE"/>
    <property type="match status" value="1"/>
</dbReference>
<dbReference type="PANTHER" id="PTHR34354:SF1">
    <property type="entry name" value="NADPH-DEPENDENT 7-CYANO-7-DEAZAGUANINE REDUCTASE"/>
    <property type="match status" value="1"/>
</dbReference>
<dbReference type="Pfam" id="PF14489">
    <property type="entry name" value="QueF"/>
    <property type="match status" value="1"/>
</dbReference>
<dbReference type="PIRSF" id="PIRSF027377">
    <property type="entry name" value="Nitrile_oxidored_QueF"/>
    <property type="match status" value="1"/>
</dbReference>
<dbReference type="SUPFAM" id="SSF55620">
    <property type="entry name" value="Tetrahydrobiopterin biosynthesis enzymes-like"/>
    <property type="match status" value="1"/>
</dbReference>
<organism>
    <name type="scientific">Methylorubrum extorquens (strain PA1)</name>
    <name type="common">Methylobacterium extorquens</name>
    <dbReference type="NCBI Taxonomy" id="419610"/>
    <lineage>
        <taxon>Bacteria</taxon>
        <taxon>Pseudomonadati</taxon>
        <taxon>Pseudomonadota</taxon>
        <taxon>Alphaproteobacteria</taxon>
        <taxon>Hyphomicrobiales</taxon>
        <taxon>Methylobacteriaceae</taxon>
        <taxon>Methylorubrum</taxon>
    </lineage>
</organism>